<feature type="chain" id="PRO_0000342531" description="Large ribosomal subunit protein uL2">
    <location>
        <begin position="1"/>
        <end position="281"/>
    </location>
</feature>
<feature type="region of interest" description="Disordered" evidence="2">
    <location>
        <begin position="220"/>
        <end position="281"/>
    </location>
</feature>
<feature type="compositionally biased region" description="Basic residues" evidence="2">
    <location>
        <begin position="258"/>
        <end position="271"/>
    </location>
</feature>
<feature type="compositionally biased region" description="Basic and acidic residues" evidence="2">
    <location>
        <begin position="272"/>
        <end position="281"/>
    </location>
</feature>
<accession>A9KJJ1</accession>
<proteinExistence type="inferred from homology"/>
<reference key="1">
    <citation type="submission" date="2007-11" db="EMBL/GenBank/DDBJ databases">
        <title>Complete genome sequence of Clostridium phytofermentans ISDg.</title>
        <authorList>
            <person name="Leschine S.B."/>
            <person name="Warnick T.A."/>
            <person name="Blanchard J.L."/>
            <person name="Schnell D.J."/>
            <person name="Petit E.L."/>
            <person name="LaTouf W.G."/>
            <person name="Copeland A."/>
            <person name="Lucas S."/>
            <person name="Lapidus A."/>
            <person name="Barry K."/>
            <person name="Glavina del Rio T."/>
            <person name="Dalin E."/>
            <person name="Tice H."/>
            <person name="Pitluck S."/>
            <person name="Kiss H."/>
            <person name="Brettin T."/>
            <person name="Bruce D."/>
            <person name="Detter J.C."/>
            <person name="Han C."/>
            <person name="Kuske C."/>
            <person name="Schmutz J."/>
            <person name="Larimer F."/>
            <person name="Land M."/>
            <person name="Hauser L."/>
            <person name="Kyrpides N."/>
            <person name="Kim E.A."/>
            <person name="Richardson P."/>
        </authorList>
    </citation>
    <scope>NUCLEOTIDE SEQUENCE [LARGE SCALE GENOMIC DNA]</scope>
    <source>
        <strain>ATCC 700394 / DSM 18823 / ISDg</strain>
    </source>
</reference>
<sequence length="281" mass="30396">MGIKTFNPYTPSRRHMTGSDFAEITTSTPEKSLVVSLKKNAGRNNQGKITVRHQGGGSRRKYRIIDFKRKKDGISAVVKTIEYDPNRTANIALICYADGEKAYILAPNGLQVGQTVMNGATAEIKVGNCLPLANIPVGSQIHNIELYPGKGGQLVRSAGNSAQLMAREGKYATLRLPSGEMRMVPISCRATLGQVGNIDHELVTLGKAGRVRHMGIRPTVRGSVMNPNDHPHGGGEGKTGIGRPGPVTPWGKPALGLKTRKKNKQSNKMIMRRRDGKALSK</sequence>
<organism>
    <name type="scientific">Lachnoclostridium phytofermentans (strain ATCC 700394 / DSM 18823 / ISDg)</name>
    <name type="common">Clostridium phytofermentans</name>
    <dbReference type="NCBI Taxonomy" id="357809"/>
    <lineage>
        <taxon>Bacteria</taxon>
        <taxon>Bacillati</taxon>
        <taxon>Bacillota</taxon>
        <taxon>Clostridia</taxon>
        <taxon>Lachnospirales</taxon>
        <taxon>Lachnospiraceae</taxon>
    </lineage>
</organism>
<comment type="function">
    <text evidence="1">One of the primary rRNA binding proteins. Required for association of the 30S and 50S subunits to form the 70S ribosome, for tRNA binding and peptide bond formation. It has been suggested to have peptidyltransferase activity; this is somewhat controversial. Makes several contacts with the 16S rRNA in the 70S ribosome.</text>
</comment>
<comment type="subunit">
    <text evidence="1">Part of the 50S ribosomal subunit. Forms a bridge to the 30S subunit in the 70S ribosome.</text>
</comment>
<comment type="similarity">
    <text evidence="1">Belongs to the universal ribosomal protein uL2 family.</text>
</comment>
<name>RL2_LACP7</name>
<dbReference type="EMBL" id="CP000885">
    <property type="protein sequence ID" value="ABX44011.1"/>
    <property type="molecule type" value="Genomic_DNA"/>
</dbReference>
<dbReference type="RefSeq" id="WP_012201659.1">
    <property type="nucleotide sequence ID" value="NC_010001.1"/>
</dbReference>
<dbReference type="SMR" id="A9KJJ1"/>
<dbReference type="STRING" id="357809.Cphy_3664"/>
<dbReference type="KEGG" id="cpy:Cphy_3664"/>
<dbReference type="eggNOG" id="COG0090">
    <property type="taxonomic scope" value="Bacteria"/>
</dbReference>
<dbReference type="HOGENOM" id="CLU_036235_2_1_9"/>
<dbReference type="OrthoDB" id="9778722at2"/>
<dbReference type="Proteomes" id="UP000000370">
    <property type="component" value="Chromosome"/>
</dbReference>
<dbReference type="GO" id="GO:0015934">
    <property type="term" value="C:large ribosomal subunit"/>
    <property type="evidence" value="ECO:0007669"/>
    <property type="project" value="InterPro"/>
</dbReference>
<dbReference type="GO" id="GO:0019843">
    <property type="term" value="F:rRNA binding"/>
    <property type="evidence" value="ECO:0007669"/>
    <property type="project" value="UniProtKB-UniRule"/>
</dbReference>
<dbReference type="GO" id="GO:0003735">
    <property type="term" value="F:structural constituent of ribosome"/>
    <property type="evidence" value="ECO:0007669"/>
    <property type="project" value="InterPro"/>
</dbReference>
<dbReference type="GO" id="GO:0016740">
    <property type="term" value="F:transferase activity"/>
    <property type="evidence" value="ECO:0007669"/>
    <property type="project" value="InterPro"/>
</dbReference>
<dbReference type="GO" id="GO:0002181">
    <property type="term" value="P:cytoplasmic translation"/>
    <property type="evidence" value="ECO:0007669"/>
    <property type="project" value="TreeGrafter"/>
</dbReference>
<dbReference type="FunFam" id="2.30.30.30:FF:000001">
    <property type="entry name" value="50S ribosomal protein L2"/>
    <property type="match status" value="1"/>
</dbReference>
<dbReference type="FunFam" id="2.40.50.140:FF:000003">
    <property type="entry name" value="50S ribosomal protein L2"/>
    <property type="match status" value="1"/>
</dbReference>
<dbReference type="FunFam" id="4.10.950.10:FF:000001">
    <property type="entry name" value="50S ribosomal protein L2"/>
    <property type="match status" value="1"/>
</dbReference>
<dbReference type="Gene3D" id="2.30.30.30">
    <property type="match status" value="1"/>
</dbReference>
<dbReference type="Gene3D" id="2.40.50.140">
    <property type="entry name" value="Nucleic acid-binding proteins"/>
    <property type="match status" value="1"/>
</dbReference>
<dbReference type="Gene3D" id="4.10.950.10">
    <property type="entry name" value="Ribosomal protein L2, domain 3"/>
    <property type="match status" value="1"/>
</dbReference>
<dbReference type="HAMAP" id="MF_01320_B">
    <property type="entry name" value="Ribosomal_uL2_B"/>
    <property type="match status" value="1"/>
</dbReference>
<dbReference type="InterPro" id="IPR012340">
    <property type="entry name" value="NA-bd_OB-fold"/>
</dbReference>
<dbReference type="InterPro" id="IPR014722">
    <property type="entry name" value="Rib_uL2_dom2"/>
</dbReference>
<dbReference type="InterPro" id="IPR002171">
    <property type="entry name" value="Ribosomal_uL2"/>
</dbReference>
<dbReference type="InterPro" id="IPR005880">
    <property type="entry name" value="Ribosomal_uL2_bac/org-type"/>
</dbReference>
<dbReference type="InterPro" id="IPR022669">
    <property type="entry name" value="Ribosomal_uL2_C"/>
</dbReference>
<dbReference type="InterPro" id="IPR022671">
    <property type="entry name" value="Ribosomal_uL2_CS"/>
</dbReference>
<dbReference type="InterPro" id="IPR014726">
    <property type="entry name" value="Ribosomal_uL2_dom3"/>
</dbReference>
<dbReference type="InterPro" id="IPR022666">
    <property type="entry name" value="Ribosomal_uL2_RNA-bd_dom"/>
</dbReference>
<dbReference type="InterPro" id="IPR008991">
    <property type="entry name" value="Translation_prot_SH3-like_sf"/>
</dbReference>
<dbReference type="NCBIfam" id="TIGR01171">
    <property type="entry name" value="rplB_bact"/>
    <property type="match status" value="1"/>
</dbReference>
<dbReference type="PANTHER" id="PTHR13691:SF5">
    <property type="entry name" value="LARGE RIBOSOMAL SUBUNIT PROTEIN UL2M"/>
    <property type="match status" value="1"/>
</dbReference>
<dbReference type="PANTHER" id="PTHR13691">
    <property type="entry name" value="RIBOSOMAL PROTEIN L2"/>
    <property type="match status" value="1"/>
</dbReference>
<dbReference type="Pfam" id="PF00181">
    <property type="entry name" value="Ribosomal_L2"/>
    <property type="match status" value="1"/>
</dbReference>
<dbReference type="Pfam" id="PF03947">
    <property type="entry name" value="Ribosomal_L2_C"/>
    <property type="match status" value="1"/>
</dbReference>
<dbReference type="PIRSF" id="PIRSF002158">
    <property type="entry name" value="Ribosomal_L2"/>
    <property type="match status" value="1"/>
</dbReference>
<dbReference type="SMART" id="SM01383">
    <property type="entry name" value="Ribosomal_L2"/>
    <property type="match status" value="1"/>
</dbReference>
<dbReference type="SMART" id="SM01382">
    <property type="entry name" value="Ribosomal_L2_C"/>
    <property type="match status" value="1"/>
</dbReference>
<dbReference type="SUPFAM" id="SSF50249">
    <property type="entry name" value="Nucleic acid-binding proteins"/>
    <property type="match status" value="1"/>
</dbReference>
<dbReference type="SUPFAM" id="SSF50104">
    <property type="entry name" value="Translation proteins SH3-like domain"/>
    <property type="match status" value="1"/>
</dbReference>
<dbReference type="PROSITE" id="PS00467">
    <property type="entry name" value="RIBOSOMAL_L2"/>
    <property type="match status" value="1"/>
</dbReference>
<protein>
    <recommendedName>
        <fullName evidence="1">Large ribosomal subunit protein uL2</fullName>
    </recommendedName>
    <alternativeName>
        <fullName evidence="3">50S ribosomal protein L2</fullName>
    </alternativeName>
</protein>
<gene>
    <name evidence="1" type="primary">rplB</name>
    <name type="ordered locus">Cphy_3664</name>
</gene>
<evidence type="ECO:0000255" key="1">
    <source>
        <dbReference type="HAMAP-Rule" id="MF_01320"/>
    </source>
</evidence>
<evidence type="ECO:0000256" key="2">
    <source>
        <dbReference type="SAM" id="MobiDB-lite"/>
    </source>
</evidence>
<evidence type="ECO:0000305" key="3"/>
<keyword id="KW-1185">Reference proteome</keyword>
<keyword id="KW-0687">Ribonucleoprotein</keyword>
<keyword id="KW-0689">Ribosomal protein</keyword>
<keyword id="KW-0694">RNA-binding</keyword>
<keyword id="KW-0699">rRNA-binding</keyword>